<name>MURG_STRS7</name>
<feature type="chain" id="PRO_1000202030" description="UDP-N-acetylglucosamine--N-acetylmuramyl-(pentapeptide) pyrophosphoryl-undecaprenol N-acetylglucosamine transferase">
    <location>
        <begin position="1"/>
        <end position="360"/>
    </location>
</feature>
<feature type="binding site" evidence="1">
    <location>
        <begin position="12"/>
        <end position="14"/>
    </location>
    <ligand>
        <name>UDP-N-acetyl-alpha-D-glucosamine</name>
        <dbReference type="ChEBI" id="CHEBI:57705"/>
    </ligand>
</feature>
<feature type="binding site" evidence="1">
    <location>
        <position position="198"/>
    </location>
    <ligand>
        <name>UDP-N-acetyl-alpha-D-glucosamine</name>
        <dbReference type="ChEBI" id="CHEBI:57705"/>
    </ligand>
</feature>
<feature type="binding site" evidence="1">
    <location>
        <position position="289"/>
    </location>
    <ligand>
        <name>UDP-N-acetyl-alpha-D-glucosamine</name>
        <dbReference type="ChEBI" id="CHEBI:57705"/>
    </ligand>
</feature>
<gene>
    <name evidence="1" type="primary">murG</name>
    <name type="ordered locus">SZO_13990</name>
</gene>
<evidence type="ECO:0000255" key="1">
    <source>
        <dbReference type="HAMAP-Rule" id="MF_00033"/>
    </source>
</evidence>
<protein>
    <recommendedName>
        <fullName evidence="1">UDP-N-acetylglucosamine--N-acetylmuramyl-(pentapeptide) pyrophosphoryl-undecaprenol N-acetylglucosamine transferase</fullName>
        <ecNumber evidence="1">2.4.1.227</ecNumber>
    </recommendedName>
    <alternativeName>
        <fullName evidence="1">Undecaprenyl-PP-MurNAc-pentapeptide-UDPGlcNAc GlcNAc transferase</fullName>
    </alternativeName>
</protein>
<organism>
    <name type="scientific">Streptococcus equi subsp. zooepidemicus (strain H70)</name>
    <dbReference type="NCBI Taxonomy" id="553483"/>
    <lineage>
        <taxon>Bacteria</taxon>
        <taxon>Bacillati</taxon>
        <taxon>Bacillota</taxon>
        <taxon>Bacilli</taxon>
        <taxon>Lactobacillales</taxon>
        <taxon>Streptococcaceae</taxon>
        <taxon>Streptococcus</taxon>
    </lineage>
</organism>
<dbReference type="EC" id="2.4.1.227" evidence="1"/>
<dbReference type="EMBL" id="FM204884">
    <property type="protein sequence ID" value="CAW99992.1"/>
    <property type="molecule type" value="Genomic_DNA"/>
</dbReference>
<dbReference type="SMR" id="C0MD54"/>
<dbReference type="KEGG" id="seq:SZO_13990"/>
<dbReference type="eggNOG" id="COG0707">
    <property type="taxonomic scope" value="Bacteria"/>
</dbReference>
<dbReference type="HOGENOM" id="CLU_037404_0_0_9"/>
<dbReference type="UniPathway" id="UPA00219"/>
<dbReference type="Proteomes" id="UP000001368">
    <property type="component" value="Chromosome"/>
</dbReference>
<dbReference type="GO" id="GO:0005886">
    <property type="term" value="C:plasma membrane"/>
    <property type="evidence" value="ECO:0007669"/>
    <property type="project" value="UniProtKB-SubCell"/>
</dbReference>
<dbReference type="GO" id="GO:0050511">
    <property type="term" value="F:undecaprenyldiphospho-muramoylpentapeptide beta-N-acetylglucosaminyltransferase activity"/>
    <property type="evidence" value="ECO:0007669"/>
    <property type="project" value="UniProtKB-UniRule"/>
</dbReference>
<dbReference type="GO" id="GO:0005975">
    <property type="term" value="P:carbohydrate metabolic process"/>
    <property type="evidence" value="ECO:0007669"/>
    <property type="project" value="InterPro"/>
</dbReference>
<dbReference type="GO" id="GO:0051301">
    <property type="term" value="P:cell division"/>
    <property type="evidence" value="ECO:0007669"/>
    <property type="project" value="UniProtKB-KW"/>
</dbReference>
<dbReference type="GO" id="GO:0071555">
    <property type="term" value="P:cell wall organization"/>
    <property type="evidence" value="ECO:0007669"/>
    <property type="project" value="UniProtKB-KW"/>
</dbReference>
<dbReference type="GO" id="GO:0030259">
    <property type="term" value="P:lipid glycosylation"/>
    <property type="evidence" value="ECO:0007669"/>
    <property type="project" value="UniProtKB-UniRule"/>
</dbReference>
<dbReference type="GO" id="GO:0009252">
    <property type="term" value="P:peptidoglycan biosynthetic process"/>
    <property type="evidence" value="ECO:0007669"/>
    <property type="project" value="UniProtKB-UniRule"/>
</dbReference>
<dbReference type="GO" id="GO:0008360">
    <property type="term" value="P:regulation of cell shape"/>
    <property type="evidence" value="ECO:0007669"/>
    <property type="project" value="UniProtKB-KW"/>
</dbReference>
<dbReference type="CDD" id="cd03785">
    <property type="entry name" value="GT28_MurG"/>
    <property type="match status" value="1"/>
</dbReference>
<dbReference type="Gene3D" id="3.40.50.2000">
    <property type="entry name" value="Glycogen Phosphorylase B"/>
    <property type="match status" value="2"/>
</dbReference>
<dbReference type="HAMAP" id="MF_00033">
    <property type="entry name" value="MurG"/>
    <property type="match status" value="1"/>
</dbReference>
<dbReference type="InterPro" id="IPR006009">
    <property type="entry name" value="GlcNAc_MurG"/>
</dbReference>
<dbReference type="InterPro" id="IPR007235">
    <property type="entry name" value="Glyco_trans_28_C"/>
</dbReference>
<dbReference type="InterPro" id="IPR004276">
    <property type="entry name" value="GlycoTrans_28_N"/>
</dbReference>
<dbReference type="PANTHER" id="PTHR21015:SF27">
    <property type="entry name" value="UDP-N-ACETYLGLUCOSAMINE--N-ACETYLMURAMYL-(PENTAPEPTIDE) PYROPHOSPHORYL-UNDECAPRENOL N-ACETYLGLUCOSAMINE TRANSFERASE"/>
    <property type="match status" value="1"/>
</dbReference>
<dbReference type="PANTHER" id="PTHR21015">
    <property type="entry name" value="UDP-N-ACETYLGLUCOSAMINE--N-ACETYLMURAMYL-(PENTAPEPTIDE) PYROPHOSPHORYL-UNDECAPRENOL N-ACETYLGLUCOSAMINE TRANSFERASE 1"/>
    <property type="match status" value="1"/>
</dbReference>
<dbReference type="Pfam" id="PF04101">
    <property type="entry name" value="Glyco_tran_28_C"/>
    <property type="match status" value="1"/>
</dbReference>
<dbReference type="Pfam" id="PF03033">
    <property type="entry name" value="Glyco_transf_28"/>
    <property type="match status" value="1"/>
</dbReference>
<dbReference type="SUPFAM" id="SSF53756">
    <property type="entry name" value="UDP-Glycosyltransferase/glycogen phosphorylase"/>
    <property type="match status" value="1"/>
</dbReference>
<comment type="function">
    <text evidence="1">Cell wall formation. Catalyzes the transfer of a GlcNAc subunit on undecaprenyl-pyrophosphoryl-MurNAc-pentapeptide (lipid intermediate I) to form undecaprenyl-pyrophosphoryl-MurNAc-(pentapeptide)GlcNAc (lipid intermediate II).</text>
</comment>
<comment type="catalytic activity">
    <reaction evidence="1">
        <text>Mur2Ac(oyl-L-Ala-gamma-D-Glu-L-Lys-D-Ala-D-Ala)-di-trans,octa-cis-undecaprenyl diphosphate + UDP-N-acetyl-alpha-D-glucosamine = beta-D-GlcNAc-(1-&gt;4)-Mur2Ac(oyl-L-Ala-gamma-D-Glu-L-Lys-D-Ala-D-Ala)-di-trans,octa-cis-undecaprenyl diphosphate + UDP + H(+)</text>
        <dbReference type="Rhea" id="RHEA:23192"/>
        <dbReference type="ChEBI" id="CHEBI:15378"/>
        <dbReference type="ChEBI" id="CHEBI:57705"/>
        <dbReference type="ChEBI" id="CHEBI:58223"/>
        <dbReference type="ChEBI" id="CHEBI:60032"/>
        <dbReference type="ChEBI" id="CHEBI:60033"/>
        <dbReference type="EC" id="2.4.1.227"/>
    </reaction>
</comment>
<comment type="pathway">
    <text evidence="1">Cell wall biogenesis; peptidoglycan biosynthesis.</text>
</comment>
<comment type="subcellular location">
    <subcellularLocation>
        <location evidence="1">Cell membrane</location>
        <topology evidence="1">Peripheral membrane protein</topology>
        <orientation evidence="1">Cytoplasmic side</orientation>
    </subcellularLocation>
</comment>
<comment type="similarity">
    <text evidence="1">Belongs to the glycosyltransferase 28 family. MurG subfamily.</text>
</comment>
<keyword id="KW-0131">Cell cycle</keyword>
<keyword id="KW-0132">Cell division</keyword>
<keyword id="KW-1003">Cell membrane</keyword>
<keyword id="KW-0133">Cell shape</keyword>
<keyword id="KW-0961">Cell wall biogenesis/degradation</keyword>
<keyword id="KW-0328">Glycosyltransferase</keyword>
<keyword id="KW-0472">Membrane</keyword>
<keyword id="KW-0573">Peptidoglycan synthesis</keyword>
<keyword id="KW-0808">Transferase</keyword>
<reference key="1">
    <citation type="journal article" date="2009" name="PLoS Pathog.">
        <title>Genomic evidence for the evolution of Streptococcus equi: host restriction, increased virulence, and genetic exchange with human pathogens.</title>
        <authorList>
            <person name="Holden M.T.G."/>
            <person name="Heather Z."/>
            <person name="Paillot R."/>
            <person name="Steward K.F."/>
            <person name="Webb K."/>
            <person name="Ainslie F."/>
            <person name="Jourdan T."/>
            <person name="Bason N.C."/>
            <person name="Holroyd N.E."/>
            <person name="Mungall K."/>
            <person name="Quail M.A."/>
            <person name="Sanders M."/>
            <person name="Simmonds M."/>
            <person name="Willey D."/>
            <person name="Brooks K."/>
            <person name="Aanensen D.M."/>
            <person name="Spratt B.G."/>
            <person name="Jolley K.A."/>
            <person name="Maiden M.C.J."/>
            <person name="Kehoe M."/>
            <person name="Chanter N."/>
            <person name="Bentley S.D."/>
            <person name="Robinson C."/>
            <person name="Maskell D.J."/>
            <person name="Parkhill J."/>
            <person name="Waller A.S."/>
        </authorList>
    </citation>
    <scope>NUCLEOTIDE SEQUENCE [LARGE SCALE GENOMIC DNA]</scope>
    <source>
        <strain>H70</strain>
    </source>
</reference>
<proteinExistence type="inferred from homology"/>
<sequence length="360" mass="40283">MTKKIIFTGGGTAGHVTLNLILIPKFIKDGWEVHYIGDDNGIEHQEIKKSGLDVAFHTIATGKLRRYFSWQNLLDIFKVGFGVMQSLFIIARLRPKALFSKGGFVSVPPVIAARLLGVPAFIHESDLSMGLANRIAYRFATTMYTTFEQEQTLVKLKHVGAVTKVTAPKSHSVASKQLAAVLEYFDPNLKTLLFIGGSAGARVFNRFITDHPELKEDFNIINISGDPSLNELSRHLYRVDYVTDLYQPLMEMADLVVTRGGSNTLFELLAMRKLQLIIPLGKEASRGDQLENAHYFTTRGYAEQLLEQELTLPHFQEKVREVFAKQSDYLSAMTSSSELQSPESFYQLLSADISSATKEN</sequence>
<accession>C0MD54</accession>